<proteinExistence type="evidence at transcript level"/>
<sequence>MELLALRWVLLAGTLLSTSAASSALQEGDLGSITVIMDMAPNSFDDQYVGCAHVMWANLQKLKCTEFARNYAYAVGWRKAAAEWQKRWGYLAHPMQLRPEQAIALLAYSAASNLYQQFNAATRQGGCSHQYYVHFYHFKTLHFLLTQALFALRASQPRCYYVYRGVRGIRFMTQRGKSVRFGQFTSTSLRKDVAVNFGQDTFFVVKTCYGVPIKQFSFYPSEDEVLIPPFEVFEVTNFCTGNGRIQIYLRSKGKMSRHNCELLKPRGGQWGRGHQEVGLGLSPGLALPVLPCSNCSCWGSGHRAGDPIPAAV</sequence>
<dbReference type="EC" id="2.4.2.31"/>
<dbReference type="EMBL" id="D31865">
    <property type="protein sequence ID" value="BAA06665.1"/>
    <property type="molecule type" value="mRNA"/>
</dbReference>
<dbReference type="PIR" id="B55461">
    <property type="entry name" value="B55461"/>
</dbReference>
<dbReference type="RefSeq" id="NP_990186.1">
    <property type="nucleotide sequence ID" value="NM_204855.1"/>
</dbReference>
<dbReference type="SMR" id="P55807"/>
<dbReference type="FunCoup" id="P55807">
    <property type="interactions" value="62"/>
</dbReference>
<dbReference type="STRING" id="9031.ENSGALP00000055442"/>
<dbReference type="Ensembl" id="ENSGALT00010007114.1">
    <property type="protein sequence ID" value="ENSGALP00010004298.1"/>
    <property type="gene ID" value="ENSGALG00010003051.1"/>
</dbReference>
<dbReference type="Ensembl" id="ENSGALT00010007193.1">
    <property type="protein sequence ID" value="ENSGALP00010004327.1"/>
    <property type="gene ID" value="ENSGALG00010003092.1"/>
</dbReference>
<dbReference type="Ensembl" id="ENSGALT00010007199.1">
    <property type="protein sequence ID" value="ENSGALP00010004331.1"/>
    <property type="gene ID" value="ENSGALG00010003092.1"/>
</dbReference>
<dbReference type="GeneID" id="395661"/>
<dbReference type="KEGG" id="gga:395661"/>
<dbReference type="CTD" id="395661"/>
<dbReference type="VEuPathDB" id="HostDB:geneid_395661"/>
<dbReference type="GeneTree" id="ENSGT01030000234601"/>
<dbReference type="InParanoid" id="P55807"/>
<dbReference type="OMA" id="KQFSFYP"/>
<dbReference type="OrthoDB" id="423533at2759"/>
<dbReference type="PhylomeDB" id="P55807"/>
<dbReference type="TreeFam" id="TF335356"/>
<dbReference type="PRO" id="PR:P55807"/>
<dbReference type="Proteomes" id="UP000000539">
    <property type="component" value="Chromosome 1"/>
</dbReference>
<dbReference type="GO" id="GO:0044194">
    <property type="term" value="C:cytolytic granule"/>
    <property type="evidence" value="ECO:0000314"/>
    <property type="project" value="AgBase"/>
</dbReference>
<dbReference type="GO" id="GO:0005615">
    <property type="term" value="C:extracellular space"/>
    <property type="evidence" value="ECO:0000314"/>
    <property type="project" value="AgBase"/>
</dbReference>
<dbReference type="GO" id="GO:0003950">
    <property type="term" value="F:NAD+ poly-ADP-ribosyltransferase activity"/>
    <property type="evidence" value="ECO:0000314"/>
    <property type="project" value="AgBase"/>
</dbReference>
<dbReference type="GO" id="GO:0106274">
    <property type="term" value="F:NAD+-protein-arginine ADP-ribosyltransferase activity"/>
    <property type="evidence" value="ECO:0007669"/>
    <property type="project" value="UniProtKB-EC"/>
</dbReference>
<dbReference type="GO" id="GO:0016779">
    <property type="term" value="F:nucleotidyltransferase activity"/>
    <property type="evidence" value="ECO:0007669"/>
    <property type="project" value="UniProtKB-KW"/>
</dbReference>
<dbReference type="GO" id="GO:0046677">
    <property type="term" value="P:response to antibiotic"/>
    <property type="evidence" value="ECO:0000314"/>
    <property type="project" value="AgBase"/>
</dbReference>
<dbReference type="FunFam" id="3.90.176.10:FF:000001">
    <property type="entry name" value="NAD(P)(+)--arginine ADP-ribosyltransferase"/>
    <property type="match status" value="1"/>
</dbReference>
<dbReference type="Gene3D" id="3.90.176.10">
    <property type="entry name" value="Toxin ADP-ribosyltransferase, Chain A, domain 1"/>
    <property type="match status" value="1"/>
</dbReference>
<dbReference type="InterPro" id="IPR050999">
    <property type="entry name" value="ADP-ribosyltransferase_ARG"/>
</dbReference>
<dbReference type="InterPro" id="IPR000768">
    <property type="entry name" value="ART"/>
</dbReference>
<dbReference type="PANTHER" id="PTHR10339">
    <property type="entry name" value="ADP-RIBOSYLTRANSFERASE"/>
    <property type="match status" value="1"/>
</dbReference>
<dbReference type="PANTHER" id="PTHR10339:SF19">
    <property type="entry name" value="GPI-LINKED NAD(P)(+)--ARGININE ADP-RIBOSYLTRANSFERASE 1"/>
    <property type="match status" value="1"/>
</dbReference>
<dbReference type="Pfam" id="PF01129">
    <property type="entry name" value="ART"/>
    <property type="match status" value="1"/>
</dbReference>
<dbReference type="PRINTS" id="PR00970">
    <property type="entry name" value="RIBTRNSFRASE"/>
</dbReference>
<dbReference type="SUPFAM" id="SSF56399">
    <property type="entry name" value="ADP-ribosylation"/>
    <property type="match status" value="1"/>
</dbReference>
<dbReference type="PROSITE" id="PS01291">
    <property type="entry name" value="ART"/>
    <property type="match status" value="1"/>
</dbReference>
<dbReference type="PROSITE" id="PS51996">
    <property type="entry name" value="TR_MART"/>
    <property type="match status" value="1"/>
</dbReference>
<comment type="catalytic activity">
    <reaction>
        <text>L-arginyl-[protein] + NAD(+) = N(omega)-(ADP-D-ribosyl)-L-arginyl-[protein] + nicotinamide + H(+)</text>
        <dbReference type="Rhea" id="RHEA:19149"/>
        <dbReference type="Rhea" id="RHEA-COMP:10532"/>
        <dbReference type="Rhea" id="RHEA-COMP:15087"/>
        <dbReference type="ChEBI" id="CHEBI:15378"/>
        <dbReference type="ChEBI" id="CHEBI:17154"/>
        <dbReference type="ChEBI" id="CHEBI:29965"/>
        <dbReference type="ChEBI" id="CHEBI:57540"/>
        <dbReference type="ChEBI" id="CHEBI:142554"/>
        <dbReference type="EC" id="2.4.2.31"/>
    </reaction>
</comment>
<comment type="subcellular location">
    <subcellularLocation>
        <location>Secreted</location>
        <location>Extracellular space</location>
    </subcellularLocation>
    <text>The mature enzyme is probably secreted from granulocytes into the extracellular space.</text>
</comment>
<comment type="similarity">
    <text evidence="4">Belongs to the Arg-specific ADP-ribosyltransferase family.</text>
</comment>
<evidence type="ECO:0000250" key="1"/>
<evidence type="ECO:0000255" key="2"/>
<evidence type="ECO:0000255" key="3">
    <source>
        <dbReference type="PROSITE-ProRule" id="PRU01340"/>
    </source>
</evidence>
<evidence type="ECO:0000305" key="4"/>
<feature type="signal peptide" evidence="2">
    <location>
        <begin position="1"/>
        <end position="20"/>
    </location>
</feature>
<feature type="propeptide" id="PRO_0000019338" evidence="1">
    <location>
        <begin position="21"/>
        <end position="31"/>
    </location>
</feature>
<feature type="chain" id="PRO_0000019339" description="NAD(P)(+)--arginine ADP-ribosyltransferase 2">
    <location>
        <begin position="32"/>
        <end position="266"/>
    </location>
</feature>
<feature type="propeptide" id="PRO_0000019340" evidence="2">
    <location>
        <begin position="267"/>
        <end position="312"/>
    </location>
</feature>
<feature type="domain" description="TR mART core" evidence="3">
    <location>
        <begin position="71"/>
        <end position="256"/>
    </location>
</feature>
<feature type="active site" evidence="3">
    <location>
        <position position="164"/>
    </location>
</feature>
<feature type="active site" evidence="3">
    <location>
        <position position="186"/>
    </location>
</feature>
<feature type="active site" evidence="3">
    <location>
        <position position="224"/>
    </location>
</feature>
<feature type="binding site" evidence="1">
    <location>
        <position position="108"/>
    </location>
    <ligand>
        <name>NAD(+)</name>
        <dbReference type="ChEBI" id="CHEBI:57540"/>
    </ligand>
</feature>
<feature type="binding site" evidence="1">
    <location>
        <position position="164"/>
    </location>
    <ligand>
        <name>NAD(+)</name>
        <dbReference type="ChEBI" id="CHEBI:57540"/>
    </ligand>
</feature>
<feature type="binding site" evidence="1">
    <location>
        <position position="183"/>
    </location>
    <ligand>
        <name>NAD(+)</name>
        <dbReference type="ChEBI" id="CHEBI:57540"/>
    </ligand>
</feature>
<feature type="binding site" evidence="1">
    <location>
        <position position="217"/>
    </location>
    <ligand>
        <name>NAD(+)</name>
        <dbReference type="ChEBI" id="CHEBI:57540"/>
    </ligand>
</feature>
<feature type="disulfide bond" evidence="1">
    <location>
        <begin position="51"/>
        <end position="260"/>
    </location>
</feature>
<feature type="disulfide bond" evidence="1">
    <location>
        <begin position="159"/>
        <end position="208"/>
    </location>
</feature>
<keyword id="KW-1015">Disulfide bond</keyword>
<keyword id="KW-0328">Glycosyltransferase</keyword>
<keyword id="KW-0520">NAD</keyword>
<keyword id="KW-0521">NADP</keyword>
<keyword id="KW-0548">Nucleotidyltransferase</keyword>
<keyword id="KW-1185">Reference proteome</keyword>
<keyword id="KW-0964">Secreted</keyword>
<keyword id="KW-0732">Signal</keyword>
<keyword id="KW-0808">Transferase</keyword>
<keyword id="KW-0865">Zymogen</keyword>
<reference key="1">
    <citation type="journal article" date="1994" name="J. Biol. Chem.">
        <title>Cloning and expression of cDNA for arginine-specific ADP-ribosyltransferase from chicken bone marrow cells.</title>
        <authorList>
            <person name="Tsuchiya M."/>
            <person name="Hara N."/>
            <person name="Yamada K."/>
            <person name="Osago H."/>
            <person name="Shimoyama M."/>
        </authorList>
    </citation>
    <scope>NUCLEOTIDE SEQUENCE [MRNA]</scope>
    <source>
        <strain>White leghorn</strain>
        <tissue>Bone marrow</tissue>
    </source>
</reference>
<organism>
    <name type="scientific">Gallus gallus</name>
    <name type="common">Chicken</name>
    <dbReference type="NCBI Taxonomy" id="9031"/>
    <lineage>
        <taxon>Eukaryota</taxon>
        <taxon>Metazoa</taxon>
        <taxon>Chordata</taxon>
        <taxon>Craniata</taxon>
        <taxon>Vertebrata</taxon>
        <taxon>Euteleostomi</taxon>
        <taxon>Archelosauria</taxon>
        <taxon>Archosauria</taxon>
        <taxon>Dinosauria</taxon>
        <taxon>Saurischia</taxon>
        <taxon>Theropoda</taxon>
        <taxon>Coelurosauria</taxon>
        <taxon>Aves</taxon>
        <taxon>Neognathae</taxon>
        <taxon>Galloanserae</taxon>
        <taxon>Galliformes</taxon>
        <taxon>Phasianidae</taxon>
        <taxon>Phasianinae</taxon>
        <taxon>Gallus</taxon>
    </lineage>
</organism>
<name>NRT2_CHICK</name>
<accession>P55807</accession>
<protein>
    <recommendedName>
        <fullName>NAD(P)(+)--arginine ADP-ribosyltransferase 2</fullName>
        <ecNumber>2.4.2.31</ecNumber>
    </recommendedName>
    <alternativeName>
        <fullName>Mono(ADP-ribosyl)transferase 2</fullName>
        <shortName>AT2</shortName>
    </alternativeName>
</protein>